<accession>Q2RRI3</accession>
<evidence type="ECO:0000255" key="1">
    <source>
        <dbReference type="HAMAP-Rule" id="MF_01609"/>
    </source>
</evidence>
<comment type="function">
    <text evidence="1">ATP-dependent carboxylate-amine ligase which exhibits weak glutamate--cysteine ligase activity.</text>
</comment>
<comment type="catalytic activity">
    <reaction evidence="1">
        <text>L-cysteine + L-glutamate + ATP = gamma-L-glutamyl-L-cysteine + ADP + phosphate + H(+)</text>
        <dbReference type="Rhea" id="RHEA:13285"/>
        <dbReference type="ChEBI" id="CHEBI:15378"/>
        <dbReference type="ChEBI" id="CHEBI:29985"/>
        <dbReference type="ChEBI" id="CHEBI:30616"/>
        <dbReference type="ChEBI" id="CHEBI:35235"/>
        <dbReference type="ChEBI" id="CHEBI:43474"/>
        <dbReference type="ChEBI" id="CHEBI:58173"/>
        <dbReference type="ChEBI" id="CHEBI:456216"/>
        <dbReference type="EC" id="6.3.2.2"/>
    </reaction>
</comment>
<comment type="similarity">
    <text evidence="1">Belongs to the glutamate--cysteine ligase type 2 family. YbdK subfamily.</text>
</comment>
<keyword id="KW-0067">ATP-binding</keyword>
<keyword id="KW-0436">Ligase</keyword>
<keyword id="KW-0547">Nucleotide-binding</keyword>
<keyword id="KW-1185">Reference proteome</keyword>
<name>GCS2_RHORT</name>
<reference key="1">
    <citation type="journal article" date="2011" name="Stand. Genomic Sci.">
        <title>Complete genome sequence of Rhodospirillum rubrum type strain (S1).</title>
        <authorList>
            <person name="Munk A.C."/>
            <person name="Copeland A."/>
            <person name="Lucas S."/>
            <person name="Lapidus A."/>
            <person name="Del Rio T.G."/>
            <person name="Barry K."/>
            <person name="Detter J.C."/>
            <person name="Hammon N."/>
            <person name="Israni S."/>
            <person name="Pitluck S."/>
            <person name="Brettin T."/>
            <person name="Bruce D."/>
            <person name="Han C."/>
            <person name="Tapia R."/>
            <person name="Gilna P."/>
            <person name="Schmutz J."/>
            <person name="Larimer F."/>
            <person name="Land M."/>
            <person name="Kyrpides N.C."/>
            <person name="Mavromatis K."/>
            <person name="Richardson P."/>
            <person name="Rohde M."/>
            <person name="Goeker M."/>
            <person name="Klenk H.P."/>
            <person name="Zhang Y."/>
            <person name="Roberts G.P."/>
            <person name="Reslewic S."/>
            <person name="Schwartz D.C."/>
        </authorList>
    </citation>
    <scope>NUCLEOTIDE SEQUENCE [LARGE SCALE GENOMIC DNA]</scope>
    <source>
        <strain>ATCC 11170 / ATH 1.1.1 / DSM 467 / LMG 4362 / NCIMB 8255 / S1</strain>
    </source>
</reference>
<organism>
    <name type="scientific">Rhodospirillum rubrum (strain ATCC 11170 / ATH 1.1.1 / DSM 467 / LMG 4362 / NCIMB 8255 / S1)</name>
    <dbReference type="NCBI Taxonomy" id="269796"/>
    <lineage>
        <taxon>Bacteria</taxon>
        <taxon>Pseudomonadati</taxon>
        <taxon>Pseudomonadota</taxon>
        <taxon>Alphaproteobacteria</taxon>
        <taxon>Rhodospirillales</taxon>
        <taxon>Rhodospirillaceae</taxon>
        <taxon>Rhodospirillum</taxon>
    </lineage>
</organism>
<proteinExistence type="inferred from homology"/>
<dbReference type="EC" id="6.3.2.2" evidence="1"/>
<dbReference type="EMBL" id="CP000230">
    <property type="protein sequence ID" value="ABC23262.1"/>
    <property type="molecule type" value="Genomic_DNA"/>
</dbReference>
<dbReference type="RefSeq" id="WP_011390215.1">
    <property type="nucleotide sequence ID" value="NC_007643.1"/>
</dbReference>
<dbReference type="RefSeq" id="YP_427549.1">
    <property type="nucleotide sequence ID" value="NC_007643.1"/>
</dbReference>
<dbReference type="SMR" id="Q2RRI3"/>
<dbReference type="STRING" id="269796.Rru_A2462"/>
<dbReference type="EnsemblBacteria" id="ABC23262">
    <property type="protein sequence ID" value="ABC23262"/>
    <property type="gene ID" value="Rru_A2462"/>
</dbReference>
<dbReference type="KEGG" id="rru:Rru_A2462"/>
<dbReference type="PATRIC" id="fig|269796.9.peg.2566"/>
<dbReference type="eggNOG" id="COG2170">
    <property type="taxonomic scope" value="Bacteria"/>
</dbReference>
<dbReference type="HOGENOM" id="CLU_044848_1_0_5"/>
<dbReference type="PhylomeDB" id="Q2RRI3"/>
<dbReference type="Proteomes" id="UP000001929">
    <property type="component" value="Chromosome"/>
</dbReference>
<dbReference type="GO" id="GO:0005524">
    <property type="term" value="F:ATP binding"/>
    <property type="evidence" value="ECO:0007669"/>
    <property type="project" value="UniProtKB-KW"/>
</dbReference>
<dbReference type="GO" id="GO:0004357">
    <property type="term" value="F:glutamate-cysteine ligase activity"/>
    <property type="evidence" value="ECO:0007669"/>
    <property type="project" value="UniProtKB-EC"/>
</dbReference>
<dbReference type="GO" id="GO:0042398">
    <property type="term" value="P:modified amino acid biosynthetic process"/>
    <property type="evidence" value="ECO:0007669"/>
    <property type="project" value="InterPro"/>
</dbReference>
<dbReference type="Gene3D" id="3.30.590.20">
    <property type="match status" value="1"/>
</dbReference>
<dbReference type="HAMAP" id="MF_01609">
    <property type="entry name" value="Glu_cys_ligase_2"/>
    <property type="match status" value="1"/>
</dbReference>
<dbReference type="InterPro" id="IPR050141">
    <property type="entry name" value="GCL_type2/YbdK_subfam"/>
</dbReference>
<dbReference type="InterPro" id="IPR006336">
    <property type="entry name" value="GCS2"/>
</dbReference>
<dbReference type="InterPro" id="IPR014746">
    <property type="entry name" value="Gln_synth/guanido_kin_cat_dom"/>
</dbReference>
<dbReference type="InterPro" id="IPR011793">
    <property type="entry name" value="YbdK"/>
</dbReference>
<dbReference type="NCBIfam" id="TIGR02050">
    <property type="entry name" value="gshA_cyan_rel"/>
    <property type="match status" value="1"/>
</dbReference>
<dbReference type="NCBIfam" id="NF010039">
    <property type="entry name" value="PRK13515.1"/>
    <property type="match status" value="1"/>
</dbReference>
<dbReference type="PANTHER" id="PTHR36510">
    <property type="entry name" value="GLUTAMATE--CYSTEINE LIGASE 2-RELATED"/>
    <property type="match status" value="1"/>
</dbReference>
<dbReference type="PANTHER" id="PTHR36510:SF1">
    <property type="entry name" value="GLUTAMATE--CYSTEINE LIGASE 2-RELATED"/>
    <property type="match status" value="1"/>
</dbReference>
<dbReference type="Pfam" id="PF04107">
    <property type="entry name" value="GCS2"/>
    <property type="match status" value="1"/>
</dbReference>
<dbReference type="SUPFAM" id="SSF55931">
    <property type="entry name" value="Glutamine synthetase/guanido kinase"/>
    <property type="match status" value="1"/>
</dbReference>
<protein>
    <recommendedName>
        <fullName evidence="1">Putative glutamate--cysteine ligase 2</fullName>
        <ecNumber evidence="1">6.3.2.2</ecNumber>
    </recommendedName>
    <alternativeName>
        <fullName evidence="1">Gamma-glutamylcysteine synthetase 2</fullName>
        <shortName evidence="1">GCS 2</shortName>
        <shortName evidence="1">Gamma-GCS 2</shortName>
    </alternativeName>
</protein>
<sequence>MREPAFTVGIEEEYLLVDRQSRALAADPPEALMTRLAAAFGDTNHGAVTPEFLRAQIEVGTKVCDSLAEAGEALGALRRVLAEEAKGFGLAPIAASTHPFAEWADLKHTPKERYDLLAEDLQAVVRRLVICGMHVHVGIEDPDLRMDLMAQVSYFLPHLLALTTSSPFWRGEDSGLKSYRIAVFSALPRTGLPDSFSSFAEYQRHVEVLVSAGLIEDSTRIWWDIRPSHRFPTLEMRIADVCTRLDDALCVAALFRCLLRMLYRLRRANQRWRHYARLLIAENRWRAQRYGLDGGLVDFGRGEVVPFADLIEELLELIAPDAAVFGCQAEVLHARTILHRGTSAHNQLRVFAEARAGGMTRDEALVAVVDHLIAQTVAPLGADAGAPGP</sequence>
<feature type="chain" id="PRO_0000255810" description="Putative glutamate--cysteine ligase 2">
    <location>
        <begin position="1"/>
        <end position="389"/>
    </location>
</feature>
<gene>
    <name type="ordered locus">Rru_A2462</name>
</gene>